<comment type="catalytic activity">
    <reaction evidence="1">
        <text>1-(2-carboxyphenylamino)-1-deoxy-D-ribulose 5-phosphate + H(+) = (1S,2R)-1-C-(indol-3-yl)glycerol 3-phosphate + CO2 + H2O</text>
        <dbReference type="Rhea" id="RHEA:23476"/>
        <dbReference type="ChEBI" id="CHEBI:15377"/>
        <dbReference type="ChEBI" id="CHEBI:15378"/>
        <dbReference type="ChEBI" id="CHEBI:16526"/>
        <dbReference type="ChEBI" id="CHEBI:58613"/>
        <dbReference type="ChEBI" id="CHEBI:58866"/>
        <dbReference type="EC" id="4.1.1.48"/>
    </reaction>
</comment>
<comment type="pathway">
    <text evidence="1">Amino-acid biosynthesis; L-tryptophan biosynthesis; L-tryptophan from chorismate: step 4/5.</text>
</comment>
<comment type="similarity">
    <text evidence="1">Belongs to the TrpC family.</text>
</comment>
<protein>
    <recommendedName>
        <fullName evidence="1">Indole-3-glycerol phosphate synthase</fullName>
        <shortName evidence="1">IGPS</shortName>
        <ecNumber evidence="1">4.1.1.48</ecNumber>
    </recommendedName>
</protein>
<gene>
    <name evidence="1" type="primary">trpC</name>
    <name type="ordered locus">SAHV_1358</name>
</gene>
<dbReference type="EC" id="4.1.1.48" evidence="1"/>
<dbReference type="EMBL" id="AP009324">
    <property type="protein sequence ID" value="BAF78241.1"/>
    <property type="molecule type" value="Genomic_DNA"/>
</dbReference>
<dbReference type="RefSeq" id="WP_000153613.1">
    <property type="nucleotide sequence ID" value="NC_009782.1"/>
</dbReference>
<dbReference type="SMR" id="A7X234"/>
<dbReference type="KEGG" id="saw:SAHV_1358"/>
<dbReference type="HOGENOM" id="CLU_034247_2_1_9"/>
<dbReference type="UniPathway" id="UPA00035">
    <property type="reaction ID" value="UER00043"/>
</dbReference>
<dbReference type="GO" id="GO:0004425">
    <property type="term" value="F:indole-3-glycerol-phosphate synthase activity"/>
    <property type="evidence" value="ECO:0007669"/>
    <property type="project" value="UniProtKB-UniRule"/>
</dbReference>
<dbReference type="GO" id="GO:0004640">
    <property type="term" value="F:phosphoribosylanthranilate isomerase activity"/>
    <property type="evidence" value="ECO:0007669"/>
    <property type="project" value="TreeGrafter"/>
</dbReference>
<dbReference type="GO" id="GO:0000162">
    <property type="term" value="P:L-tryptophan biosynthetic process"/>
    <property type="evidence" value="ECO:0007669"/>
    <property type="project" value="UniProtKB-UniRule"/>
</dbReference>
<dbReference type="CDD" id="cd00331">
    <property type="entry name" value="IGPS"/>
    <property type="match status" value="1"/>
</dbReference>
<dbReference type="FunFam" id="3.20.20.70:FF:000212">
    <property type="entry name" value="Indole-3-glycerol phosphate synthase"/>
    <property type="match status" value="1"/>
</dbReference>
<dbReference type="Gene3D" id="3.20.20.70">
    <property type="entry name" value="Aldolase class I"/>
    <property type="match status" value="1"/>
</dbReference>
<dbReference type="HAMAP" id="MF_00134_B">
    <property type="entry name" value="IGPS_B"/>
    <property type="match status" value="1"/>
</dbReference>
<dbReference type="InterPro" id="IPR013785">
    <property type="entry name" value="Aldolase_TIM"/>
</dbReference>
<dbReference type="InterPro" id="IPR045186">
    <property type="entry name" value="Indole-3-glycerol_P_synth"/>
</dbReference>
<dbReference type="InterPro" id="IPR013798">
    <property type="entry name" value="Indole-3-glycerol_P_synth_dom"/>
</dbReference>
<dbReference type="InterPro" id="IPR001468">
    <property type="entry name" value="Indole-3-GlycerolPSynthase_CS"/>
</dbReference>
<dbReference type="InterPro" id="IPR011060">
    <property type="entry name" value="RibuloseP-bd_barrel"/>
</dbReference>
<dbReference type="NCBIfam" id="NF001371">
    <property type="entry name" value="PRK00278.1-3"/>
    <property type="match status" value="1"/>
</dbReference>
<dbReference type="PANTHER" id="PTHR22854:SF2">
    <property type="entry name" value="INDOLE-3-GLYCEROL-PHOSPHATE SYNTHASE"/>
    <property type="match status" value="1"/>
</dbReference>
<dbReference type="PANTHER" id="PTHR22854">
    <property type="entry name" value="TRYPTOPHAN BIOSYNTHESIS PROTEIN"/>
    <property type="match status" value="1"/>
</dbReference>
<dbReference type="Pfam" id="PF00218">
    <property type="entry name" value="IGPS"/>
    <property type="match status" value="1"/>
</dbReference>
<dbReference type="SUPFAM" id="SSF51366">
    <property type="entry name" value="Ribulose-phoshate binding barrel"/>
    <property type="match status" value="1"/>
</dbReference>
<dbReference type="PROSITE" id="PS00614">
    <property type="entry name" value="IGPS"/>
    <property type="match status" value="1"/>
</dbReference>
<accession>A7X234</accession>
<reference key="1">
    <citation type="journal article" date="2008" name="Antimicrob. Agents Chemother.">
        <title>Mutated response regulator graR is responsible for phenotypic conversion of Staphylococcus aureus from heterogeneous vancomycin-intermediate resistance to vancomycin-intermediate resistance.</title>
        <authorList>
            <person name="Neoh H.-M."/>
            <person name="Cui L."/>
            <person name="Yuzawa H."/>
            <person name="Takeuchi F."/>
            <person name="Matsuo M."/>
            <person name="Hiramatsu K."/>
        </authorList>
    </citation>
    <scope>NUCLEOTIDE SEQUENCE [LARGE SCALE GENOMIC DNA]</scope>
    <source>
        <strain>Mu3 / ATCC 700698</strain>
    </source>
</reference>
<sequence length="260" mass="29509">MTILAEIVKYKQSLLQNGYYQDKLNTLKSVKIQNKKSFINAIEKEPKLAIIAEIKSKSPTVNDLPERDLSQQISDYEKYGANAVSILTDEKYFGGSFERLQALTTKTTLPVLCKDFIIDPLQIDVAKQAGASMILLIVNILSDKQLKDLYNYAISQNLEVLIEVHDRHELERAYKVNAKLIGVNNRDLKRFVTNVEHTNTILENKKPNHHYISESGIHDASDVRKILHSGIDGLLIGEALMRCDNLSEFLPQLKMQKVKS</sequence>
<organism>
    <name type="scientific">Staphylococcus aureus (strain Mu3 / ATCC 700698)</name>
    <dbReference type="NCBI Taxonomy" id="418127"/>
    <lineage>
        <taxon>Bacteria</taxon>
        <taxon>Bacillati</taxon>
        <taxon>Bacillota</taxon>
        <taxon>Bacilli</taxon>
        <taxon>Bacillales</taxon>
        <taxon>Staphylococcaceae</taxon>
        <taxon>Staphylococcus</taxon>
    </lineage>
</organism>
<keyword id="KW-0028">Amino-acid biosynthesis</keyword>
<keyword id="KW-0057">Aromatic amino acid biosynthesis</keyword>
<keyword id="KW-0210">Decarboxylase</keyword>
<keyword id="KW-0456">Lyase</keyword>
<keyword id="KW-0822">Tryptophan biosynthesis</keyword>
<name>TRPC_STAA1</name>
<proteinExistence type="inferred from homology"/>
<feature type="chain" id="PRO_1000095886" description="Indole-3-glycerol phosphate synthase">
    <location>
        <begin position="1"/>
        <end position="260"/>
    </location>
</feature>
<evidence type="ECO:0000255" key="1">
    <source>
        <dbReference type="HAMAP-Rule" id="MF_00134"/>
    </source>
</evidence>